<dbReference type="EC" id="3.6.1.9" evidence="1"/>
<dbReference type="EMBL" id="CP001344">
    <property type="protein sequence ID" value="ACL47192.1"/>
    <property type="molecule type" value="Genomic_DNA"/>
</dbReference>
<dbReference type="SMR" id="B8HN65"/>
<dbReference type="STRING" id="395961.Cyan7425_4892"/>
<dbReference type="KEGG" id="cyn:Cyan7425_4892"/>
<dbReference type="eggNOG" id="COG0424">
    <property type="taxonomic scope" value="Bacteria"/>
</dbReference>
<dbReference type="HOGENOM" id="CLU_040416_1_2_3"/>
<dbReference type="OrthoDB" id="9807767at2"/>
<dbReference type="GO" id="GO:0005737">
    <property type="term" value="C:cytoplasm"/>
    <property type="evidence" value="ECO:0007669"/>
    <property type="project" value="UniProtKB-SubCell"/>
</dbReference>
<dbReference type="GO" id="GO:0047429">
    <property type="term" value="F:nucleoside triphosphate diphosphatase activity"/>
    <property type="evidence" value="ECO:0007669"/>
    <property type="project" value="UniProtKB-EC"/>
</dbReference>
<dbReference type="GO" id="GO:0009117">
    <property type="term" value="P:nucleotide metabolic process"/>
    <property type="evidence" value="ECO:0007669"/>
    <property type="project" value="UniProtKB-KW"/>
</dbReference>
<dbReference type="CDD" id="cd00555">
    <property type="entry name" value="Maf"/>
    <property type="match status" value="1"/>
</dbReference>
<dbReference type="Gene3D" id="3.90.950.10">
    <property type="match status" value="1"/>
</dbReference>
<dbReference type="HAMAP" id="MF_00528">
    <property type="entry name" value="Maf"/>
    <property type="match status" value="1"/>
</dbReference>
<dbReference type="InterPro" id="IPR029001">
    <property type="entry name" value="ITPase-like_fam"/>
</dbReference>
<dbReference type="InterPro" id="IPR003697">
    <property type="entry name" value="Maf-like"/>
</dbReference>
<dbReference type="NCBIfam" id="TIGR00172">
    <property type="entry name" value="maf"/>
    <property type="match status" value="1"/>
</dbReference>
<dbReference type="PANTHER" id="PTHR43213">
    <property type="entry name" value="BIFUNCTIONAL DTTP/UTP PYROPHOSPHATASE/METHYLTRANSFERASE PROTEIN-RELATED"/>
    <property type="match status" value="1"/>
</dbReference>
<dbReference type="PANTHER" id="PTHR43213:SF5">
    <property type="entry name" value="BIFUNCTIONAL DTTP_UTP PYROPHOSPHATASE_METHYLTRANSFERASE PROTEIN-RELATED"/>
    <property type="match status" value="1"/>
</dbReference>
<dbReference type="Pfam" id="PF02545">
    <property type="entry name" value="Maf"/>
    <property type="match status" value="1"/>
</dbReference>
<dbReference type="PIRSF" id="PIRSF006305">
    <property type="entry name" value="Maf"/>
    <property type="match status" value="1"/>
</dbReference>
<dbReference type="SUPFAM" id="SSF52972">
    <property type="entry name" value="ITPase-like"/>
    <property type="match status" value="1"/>
</dbReference>
<gene>
    <name type="ordered locus">Cyan7425_4892</name>
</gene>
<name>NTPP_CYAP4</name>
<protein>
    <recommendedName>
        <fullName evidence="1">Nucleoside triphosphate pyrophosphatase</fullName>
        <ecNumber evidence="1">3.6.1.9</ecNumber>
    </recommendedName>
    <alternativeName>
        <fullName evidence="1">Nucleotide pyrophosphatase</fullName>
        <shortName evidence="1">Nucleotide PPase</shortName>
    </alternativeName>
</protein>
<feature type="chain" id="PRO_1000146288" description="Nucleoside triphosphate pyrophosphatase">
    <location>
        <begin position="1"/>
        <end position="195"/>
    </location>
</feature>
<feature type="active site" description="Proton acceptor" evidence="1">
    <location>
        <position position="70"/>
    </location>
</feature>
<comment type="function">
    <text evidence="1">Nucleoside triphosphate pyrophosphatase. May have a dual role in cell division arrest and in preventing the incorporation of modified nucleotides into cellular nucleic acids.</text>
</comment>
<comment type="catalytic activity">
    <reaction evidence="1">
        <text>a ribonucleoside 5'-triphosphate + H2O = a ribonucleoside 5'-phosphate + diphosphate + H(+)</text>
        <dbReference type="Rhea" id="RHEA:23996"/>
        <dbReference type="ChEBI" id="CHEBI:15377"/>
        <dbReference type="ChEBI" id="CHEBI:15378"/>
        <dbReference type="ChEBI" id="CHEBI:33019"/>
        <dbReference type="ChEBI" id="CHEBI:58043"/>
        <dbReference type="ChEBI" id="CHEBI:61557"/>
        <dbReference type="EC" id="3.6.1.9"/>
    </reaction>
</comment>
<comment type="catalytic activity">
    <reaction evidence="1">
        <text>a 2'-deoxyribonucleoside 5'-triphosphate + H2O = a 2'-deoxyribonucleoside 5'-phosphate + diphosphate + H(+)</text>
        <dbReference type="Rhea" id="RHEA:44644"/>
        <dbReference type="ChEBI" id="CHEBI:15377"/>
        <dbReference type="ChEBI" id="CHEBI:15378"/>
        <dbReference type="ChEBI" id="CHEBI:33019"/>
        <dbReference type="ChEBI" id="CHEBI:61560"/>
        <dbReference type="ChEBI" id="CHEBI:65317"/>
        <dbReference type="EC" id="3.6.1.9"/>
    </reaction>
</comment>
<comment type="cofactor">
    <cofactor evidence="1">
        <name>a divalent metal cation</name>
        <dbReference type="ChEBI" id="CHEBI:60240"/>
    </cofactor>
</comment>
<comment type="subcellular location">
    <subcellularLocation>
        <location evidence="1">Cytoplasm</location>
    </subcellularLocation>
</comment>
<comment type="similarity">
    <text evidence="1">Belongs to the Maf family.</text>
</comment>
<keyword id="KW-0963">Cytoplasm</keyword>
<keyword id="KW-0378">Hydrolase</keyword>
<keyword id="KW-0546">Nucleotide metabolism</keyword>
<organism>
    <name type="scientific">Cyanothece sp. (strain PCC 7425 / ATCC 29141)</name>
    <dbReference type="NCBI Taxonomy" id="395961"/>
    <lineage>
        <taxon>Bacteria</taxon>
        <taxon>Bacillati</taxon>
        <taxon>Cyanobacteriota</taxon>
        <taxon>Cyanophyceae</taxon>
        <taxon>Gomontiellales</taxon>
        <taxon>Cyanothecaceae</taxon>
        <taxon>Cyanothece</taxon>
    </lineage>
</organism>
<reference key="1">
    <citation type="journal article" date="2011" name="MBio">
        <title>Novel metabolic attributes of the genus Cyanothece, comprising a group of unicellular nitrogen-fixing Cyanobacteria.</title>
        <authorList>
            <person name="Bandyopadhyay A."/>
            <person name="Elvitigala T."/>
            <person name="Welsh E."/>
            <person name="Stockel J."/>
            <person name="Liberton M."/>
            <person name="Min H."/>
            <person name="Sherman L.A."/>
            <person name="Pakrasi H.B."/>
        </authorList>
    </citation>
    <scope>NUCLEOTIDE SEQUENCE [LARGE SCALE GENOMIC DNA]</scope>
    <source>
        <strain>PCC 7425 / ATCC 29141</strain>
    </source>
</reference>
<accession>B8HN65</accession>
<proteinExistence type="inferred from homology"/>
<sequence>MLQFVLASASPARRQLLQSIGINPLVYQSNFDESSVAIADHHELVQTLARCKAEVVANQLAAPALVLGCDSVLVLQGKIYGKPKDPADAIARWQSMRGQSGELLTGHTLIDLYQNKTLVRLEITQVDFAWISDRQIAAYVATGEPLNCAGAFALDGRGGLFVDRIVGCPSNVIGLSLPLLRKMLTALGYSPADCW</sequence>
<evidence type="ECO:0000255" key="1">
    <source>
        <dbReference type="HAMAP-Rule" id="MF_00528"/>
    </source>
</evidence>